<keyword id="KW-0112">Calmodulin-binding</keyword>
<keyword id="KW-0472">Membrane</keyword>
<keyword id="KW-0568">Pathogenesis-related protein</keyword>
<keyword id="KW-0611">Plant defense</keyword>
<keyword id="KW-1185">Reference proteome</keyword>
<keyword id="KW-0812">Transmembrane</keyword>
<keyword id="KW-1133">Transmembrane helix</keyword>
<proteinExistence type="evidence at transcript level"/>
<protein>
    <recommendedName>
        <fullName>MLO-like protein 13</fullName>
        <shortName>AtMlo13</shortName>
        <shortName>AtMlo20</shortName>
    </recommendedName>
</protein>
<sequence length="478" mass="55068">MAEARSGSLEYTPTWVVAFICFIIVLLSLLAERGLHHLGKCLKRRQQDALFEALQKLKEELMLLGFISLMLTVSQAAIRHICVPPALVNNMFPCKKPLEEHHAPKSSHSIINNARHLLSTGESPDHCAAKGQVPLVSVEALHQLHIFIFVLAVFHVIFCASTMVLGGARIQQWKHWEDWFKKRPSQKGTTRRGHHAHAHELFSANHEFFEMHAGGFWRRSVVISWVRSFFKQFYGSVTKSEYIALRQAFIMSHCRTNPSFDFHKYMLRTLEIDFKKVVSISWYLWLFVVVFLLLNVGGWNTYFWLSFLPLILLLMVGAKLEYIISSLALDVSEKRSRAEEAVITPSDELFWFHRPGIVLQLIHFILFQNSFEIAFFFWILFTYGIHSCIMEKLGYLIPRLVMGVLVQVLCSYSTLPLYALVTQMGSKFKKGIFDNVVQSTLEGWLEDTRNRGESTSEAHRIEMQPTTPESYNVQSENP</sequence>
<gene>
    <name type="primary">MLO13</name>
    <name type="ordered locus">At4g24250</name>
    <name type="ORF">T22A6.80</name>
</gene>
<dbReference type="EMBL" id="AF369574">
    <property type="protein sequence ID" value="AAK53806.1"/>
    <property type="molecule type" value="mRNA"/>
</dbReference>
<dbReference type="EMBL" id="AL078637">
    <property type="protein sequence ID" value="CAB45060.1"/>
    <property type="status" value="ALT_SEQ"/>
    <property type="molecule type" value="Genomic_DNA"/>
</dbReference>
<dbReference type="EMBL" id="AL161561">
    <property type="protein sequence ID" value="CAB79335.1"/>
    <property type="status" value="ALT_SEQ"/>
    <property type="molecule type" value="Genomic_DNA"/>
</dbReference>
<dbReference type="EMBL" id="CP002687">
    <property type="protein sequence ID" value="AEE84878.1"/>
    <property type="molecule type" value="Genomic_DNA"/>
</dbReference>
<dbReference type="PIR" id="T09888">
    <property type="entry name" value="T09888"/>
</dbReference>
<dbReference type="RefSeq" id="NP_567697.1">
    <property type="nucleotide sequence ID" value="NM_118558.4"/>
</dbReference>
<dbReference type="SMR" id="Q94KB2"/>
<dbReference type="BioGRID" id="13815">
    <property type="interactions" value="3"/>
</dbReference>
<dbReference type="FunCoup" id="Q94KB2">
    <property type="interactions" value="31"/>
</dbReference>
<dbReference type="STRING" id="3702.Q94KB2"/>
<dbReference type="iPTMnet" id="Q94KB2"/>
<dbReference type="PaxDb" id="3702-AT4G24250.1"/>
<dbReference type="ProteomicsDB" id="238358"/>
<dbReference type="EnsemblPlants" id="AT4G24250.1">
    <property type="protein sequence ID" value="AT4G24250.1"/>
    <property type="gene ID" value="AT4G24250"/>
</dbReference>
<dbReference type="GeneID" id="828526"/>
<dbReference type="Gramene" id="AT4G24250.1">
    <property type="protein sequence ID" value="AT4G24250.1"/>
    <property type="gene ID" value="AT4G24250"/>
</dbReference>
<dbReference type="KEGG" id="ath:AT4G24250"/>
<dbReference type="Araport" id="AT4G24250"/>
<dbReference type="TAIR" id="AT4G24250">
    <property type="gene designation" value="MLO13"/>
</dbReference>
<dbReference type="eggNOG" id="ENOG502QSME">
    <property type="taxonomic scope" value="Eukaryota"/>
</dbReference>
<dbReference type="HOGENOM" id="CLU_024720_3_0_1"/>
<dbReference type="InParanoid" id="Q94KB2"/>
<dbReference type="PhylomeDB" id="Q94KB2"/>
<dbReference type="PRO" id="PR:Q94KB2"/>
<dbReference type="Proteomes" id="UP000006548">
    <property type="component" value="Chromosome 4"/>
</dbReference>
<dbReference type="ExpressionAtlas" id="Q94KB2">
    <property type="expression patterns" value="baseline and differential"/>
</dbReference>
<dbReference type="GO" id="GO:0016020">
    <property type="term" value="C:membrane"/>
    <property type="evidence" value="ECO:0007669"/>
    <property type="project" value="UniProtKB-SubCell"/>
</dbReference>
<dbReference type="GO" id="GO:0005516">
    <property type="term" value="F:calmodulin binding"/>
    <property type="evidence" value="ECO:0007669"/>
    <property type="project" value="UniProtKB-KW"/>
</dbReference>
<dbReference type="GO" id="GO:0006952">
    <property type="term" value="P:defense response"/>
    <property type="evidence" value="ECO:0007669"/>
    <property type="project" value="UniProtKB-KW"/>
</dbReference>
<dbReference type="InterPro" id="IPR004326">
    <property type="entry name" value="Mlo"/>
</dbReference>
<dbReference type="PANTHER" id="PTHR31942">
    <property type="entry name" value="MLO-LIKE PROTEIN 1"/>
    <property type="match status" value="1"/>
</dbReference>
<dbReference type="PANTHER" id="PTHR31942:SF54">
    <property type="entry name" value="MLO-LIKE PROTEIN 13"/>
    <property type="match status" value="1"/>
</dbReference>
<dbReference type="Pfam" id="PF03094">
    <property type="entry name" value="Mlo"/>
    <property type="match status" value="1"/>
</dbReference>
<feature type="chain" id="PRO_0000209943" description="MLO-like protein 13">
    <location>
        <begin position="1"/>
        <end position="478"/>
    </location>
</feature>
<feature type="topological domain" description="Extracellular" evidence="2">
    <location>
        <begin position="1"/>
        <end position="10"/>
    </location>
</feature>
<feature type="transmembrane region" description="Helical; Name=1" evidence="2">
    <location>
        <begin position="11"/>
        <end position="31"/>
    </location>
</feature>
<feature type="topological domain" description="Cytoplasmic" evidence="2">
    <location>
        <begin position="32"/>
        <end position="60"/>
    </location>
</feature>
<feature type="transmembrane region" description="Helical; Name=2" evidence="2">
    <location>
        <begin position="61"/>
        <end position="81"/>
    </location>
</feature>
<feature type="topological domain" description="Extracellular" evidence="2">
    <location>
        <begin position="82"/>
        <end position="145"/>
    </location>
</feature>
<feature type="transmembrane region" description="Helical; Name=3" evidence="2">
    <location>
        <begin position="146"/>
        <end position="166"/>
    </location>
</feature>
<feature type="topological domain" description="Cytoplasmic" evidence="2">
    <location>
        <begin position="167"/>
        <end position="276"/>
    </location>
</feature>
<feature type="transmembrane region" description="Helical; Name=4" evidence="2">
    <location>
        <begin position="277"/>
        <end position="297"/>
    </location>
</feature>
<feature type="transmembrane region" description="Helical; Name=5" evidence="2">
    <location>
        <begin position="298"/>
        <end position="318"/>
    </location>
</feature>
<feature type="topological domain" description="Cytoplasmic" evidence="2">
    <location>
        <begin position="319"/>
        <end position="360"/>
    </location>
</feature>
<feature type="transmembrane region" description="Helical; Name=6" evidence="2">
    <location>
        <begin position="361"/>
        <end position="381"/>
    </location>
</feature>
<feature type="topological domain" description="Extracellular" evidence="2">
    <location>
        <begin position="382"/>
        <end position="400"/>
    </location>
</feature>
<feature type="transmembrane region" description="Helical; Name=7" evidence="2">
    <location>
        <begin position="401"/>
        <end position="421"/>
    </location>
</feature>
<feature type="topological domain" description="Cytoplasmic" evidence="2">
    <location>
        <begin position="422"/>
        <end position="478"/>
    </location>
</feature>
<feature type="region of interest" description="Calmodulin-binding">
    <location>
        <begin position="435"/>
        <end position="456"/>
    </location>
</feature>
<feature type="region of interest" description="Disordered" evidence="3">
    <location>
        <begin position="449"/>
        <end position="478"/>
    </location>
</feature>
<feature type="compositionally biased region" description="Basic and acidic residues" evidence="3">
    <location>
        <begin position="449"/>
        <end position="462"/>
    </location>
</feature>
<feature type="compositionally biased region" description="Polar residues" evidence="3">
    <location>
        <begin position="464"/>
        <end position="478"/>
    </location>
</feature>
<comment type="function">
    <text evidence="1">May be involved in modulation of pathogen defense and leaf cell death. Activity seems to be regulated by Ca(2+)-dependent calmodulin binding and seems not to require heterotrimeric G proteins (By similarity).</text>
</comment>
<comment type="subcellular location">
    <subcellularLocation>
        <location evidence="1">Membrane</location>
        <topology evidence="1">Multi-pass membrane protein</topology>
    </subcellularLocation>
</comment>
<comment type="domain">
    <text evidence="1">The C-terminus contains a calmodulin-binding domain, which binds calmodulin in a calcium-dependent fashion.</text>
</comment>
<comment type="similarity">
    <text evidence="4">Belongs to the MLO family.</text>
</comment>
<comment type="sequence caution" evidence="4">
    <conflict type="erroneous gene model prediction">
        <sequence resource="EMBL-CDS" id="CAB45060"/>
    </conflict>
</comment>
<comment type="sequence caution" evidence="4">
    <conflict type="erroneous gene model prediction">
        <sequence resource="EMBL-CDS" id="CAB79335"/>
    </conflict>
</comment>
<evidence type="ECO:0000250" key="1"/>
<evidence type="ECO:0000255" key="2"/>
<evidence type="ECO:0000256" key="3">
    <source>
        <dbReference type="SAM" id="MobiDB-lite"/>
    </source>
</evidence>
<evidence type="ECO:0000305" key="4"/>
<name>MLO13_ARATH</name>
<accession>Q94KB2</accession>
<accession>Q9STW9</accession>
<organism>
    <name type="scientific">Arabidopsis thaliana</name>
    <name type="common">Mouse-ear cress</name>
    <dbReference type="NCBI Taxonomy" id="3702"/>
    <lineage>
        <taxon>Eukaryota</taxon>
        <taxon>Viridiplantae</taxon>
        <taxon>Streptophyta</taxon>
        <taxon>Embryophyta</taxon>
        <taxon>Tracheophyta</taxon>
        <taxon>Spermatophyta</taxon>
        <taxon>Magnoliopsida</taxon>
        <taxon>eudicotyledons</taxon>
        <taxon>Gunneridae</taxon>
        <taxon>Pentapetalae</taxon>
        <taxon>rosids</taxon>
        <taxon>malvids</taxon>
        <taxon>Brassicales</taxon>
        <taxon>Brassicaceae</taxon>
        <taxon>Camelineae</taxon>
        <taxon>Arabidopsis</taxon>
    </lineage>
</organism>
<reference key="1">
    <citation type="journal article" date="2003" name="J. Mol. Evol.">
        <title>Molecular phylogeny and evolution of the plant-specific seven-transmembrane MLO family.</title>
        <authorList>
            <person name="Devoto A."/>
            <person name="Hartmann H.A."/>
            <person name="Piffanelli P."/>
            <person name="Elliott C."/>
            <person name="Simmons C."/>
            <person name="Taramino G."/>
            <person name="Goh C.-S."/>
            <person name="Cohen F.E."/>
            <person name="Emerson B.C."/>
            <person name="Schulze-Lefert P."/>
            <person name="Panstruga R."/>
        </authorList>
    </citation>
    <scope>NUCLEOTIDE SEQUENCE [MRNA]</scope>
</reference>
<reference key="2">
    <citation type="journal article" date="1999" name="Nature">
        <title>Sequence and analysis of chromosome 4 of the plant Arabidopsis thaliana.</title>
        <authorList>
            <person name="Mayer K.F.X."/>
            <person name="Schueller C."/>
            <person name="Wambutt R."/>
            <person name="Murphy G."/>
            <person name="Volckaert G."/>
            <person name="Pohl T."/>
            <person name="Duesterhoeft A."/>
            <person name="Stiekema W."/>
            <person name="Entian K.-D."/>
            <person name="Terryn N."/>
            <person name="Harris B."/>
            <person name="Ansorge W."/>
            <person name="Brandt P."/>
            <person name="Grivell L.A."/>
            <person name="Rieger M."/>
            <person name="Weichselgartner M."/>
            <person name="de Simone V."/>
            <person name="Obermaier B."/>
            <person name="Mache R."/>
            <person name="Mueller M."/>
            <person name="Kreis M."/>
            <person name="Delseny M."/>
            <person name="Puigdomenech P."/>
            <person name="Watson M."/>
            <person name="Schmidtheini T."/>
            <person name="Reichert B."/>
            <person name="Portetelle D."/>
            <person name="Perez-Alonso M."/>
            <person name="Boutry M."/>
            <person name="Bancroft I."/>
            <person name="Vos P."/>
            <person name="Hoheisel J."/>
            <person name="Zimmermann W."/>
            <person name="Wedler H."/>
            <person name="Ridley P."/>
            <person name="Langham S.-A."/>
            <person name="McCullagh B."/>
            <person name="Bilham L."/>
            <person name="Robben J."/>
            <person name="van der Schueren J."/>
            <person name="Grymonprez B."/>
            <person name="Chuang Y.-J."/>
            <person name="Vandenbussche F."/>
            <person name="Braeken M."/>
            <person name="Weltjens I."/>
            <person name="Voet M."/>
            <person name="Bastiaens I."/>
            <person name="Aert R."/>
            <person name="Defoor E."/>
            <person name="Weitzenegger T."/>
            <person name="Bothe G."/>
            <person name="Ramsperger U."/>
            <person name="Hilbert H."/>
            <person name="Braun M."/>
            <person name="Holzer E."/>
            <person name="Brandt A."/>
            <person name="Peters S."/>
            <person name="van Staveren M."/>
            <person name="Dirkse W."/>
            <person name="Mooijman P."/>
            <person name="Klein Lankhorst R."/>
            <person name="Rose M."/>
            <person name="Hauf J."/>
            <person name="Koetter P."/>
            <person name="Berneiser S."/>
            <person name="Hempel S."/>
            <person name="Feldpausch M."/>
            <person name="Lamberth S."/>
            <person name="Van den Daele H."/>
            <person name="De Keyser A."/>
            <person name="Buysshaert C."/>
            <person name="Gielen J."/>
            <person name="Villarroel R."/>
            <person name="De Clercq R."/>
            <person name="van Montagu M."/>
            <person name="Rogers J."/>
            <person name="Cronin A."/>
            <person name="Quail M.A."/>
            <person name="Bray-Allen S."/>
            <person name="Clark L."/>
            <person name="Doggett J."/>
            <person name="Hall S."/>
            <person name="Kay M."/>
            <person name="Lennard N."/>
            <person name="McLay K."/>
            <person name="Mayes R."/>
            <person name="Pettett A."/>
            <person name="Rajandream M.A."/>
            <person name="Lyne M."/>
            <person name="Benes V."/>
            <person name="Rechmann S."/>
            <person name="Borkova D."/>
            <person name="Bloecker H."/>
            <person name="Scharfe M."/>
            <person name="Grimm M."/>
            <person name="Loehnert T.-H."/>
            <person name="Dose S."/>
            <person name="de Haan M."/>
            <person name="Maarse A.C."/>
            <person name="Schaefer M."/>
            <person name="Mueller-Auer S."/>
            <person name="Gabel C."/>
            <person name="Fuchs M."/>
            <person name="Fartmann B."/>
            <person name="Granderath K."/>
            <person name="Dauner D."/>
            <person name="Herzl A."/>
            <person name="Neumann S."/>
            <person name="Argiriou A."/>
            <person name="Vitale D."/>
            <person name="Liguori R."/>
            <person name="Piravandi E."/>
            <person name="Massenet O."/>
            <person name="Quigley F."/>
            <person name="Clabauld G."/>
            <person name="Muendlein A."/>
            <person name="Felber R."/>
            <person name="Schnabl S."/>
            <person name="Hiller R."/>
            <person name="Schmidt W."/>
            <person name="Lecharny A."/>
            <person name="Aubourg S."/>
            <person name="Chefdor F."/>
            <person name="Cooke R."/>
            <person name="Berger C."/>
            <person name="Monfort A."/>
            <person name="Casacuberta E."/>
            <person name="Gibbons T."/>
            <person name="Weber N."/>
            <person name="Vandenbol M."/>
            <person name="Bargues M."/>
            <person name="Terol J."/>
            <person name="Torres A."/>
            <person name="Perez-Perez A."/>
            <person name="Purnelle B."/>
            <person name="Bent E."/>
            <person name="Johnson S."/>
            <person name="Tacon D."/>
            <person name="Jesse T."/>
            <person name="Heijnen L."/>
            <person name="Schwarz S."/>
            <person name="Scholler P."/>
            <person name="Heber S."/>
            <person name="Francs P."/>
            <person name="Bielke C."/>
            <person name="Frishman D."/>
            <person name="Haase D."/>
            <person name="Lemcke K."/>
            <person name="Mewes H.-W."/>
            <person name="Stocker S."/>
            <person name="Zaccaria P."/>
            <person name="Bevan M."/>
            <person name="Wilson R.K."/>
            <person name="de la Bastide M."/>
            <person name="Habermann K."/>
            <person name="Parnell L."/>
            <person name="Dedhia N."/>
            <person name="Gnoj L."/>
            <person name="Schutz K."/>
            <person name="Huang E."/>
            <person name="Spiegel L."/>
            <person name="Sekhon M."/>
            <person name="Murray J."/>
            <person name="Sheet P."/>
            <person name="Cordes M."/>
            <person name="Abu-Threideh J."/>
            <person name="Stoneking T."/>
            <person name="Kalicki J."/>
            <person name="Graves T."/>
            <person name="Harmon G."/>
            <person name="Edwards J."/>
            <person name="Latreille P."/>
            <person name="Courtney L."/>
            <person name="Cloud J."/>
            <person name="Abbott A."/>
            <person name="Scott K."/>
            <person name="Johnson D."/>
            <person name="Minx P."/>
            <person name="Bentley D."/>
            <person name="Fulton B."/>
            <person name="Miller N."/>
            <person name="Greco T."/>
            <person name="Kemp K."/>
            <person name="Kramer J."/>
            <person name="Fulton L."/>
            <person name="Mardis E."/>
            <person name="Dante M."/>
            <person name="Pepin K."/>
            <person name="Hillier L.W."/>
            <person name="Nelson J."/>
            <person name="Spieth J."/>
            <person name="Ryan E."/>
            <person name="Andrews S."/>
            <person name="Geisel C."/>
            <person name="Layman D."/>
            <person name="Du H."/>
            <person name="Ali J."/>
            <person name="Berghoff A."/>
            <person name="Jones K."/>
            <person name="Drone K."/>
            <person name="Cotton M."/>
            <person name="Joshu C."/>
            <person name="Antonoiu B."/>
            <person name="Zidanic M."/>
            <person name="Strong C."/>
            <person name="Sun H."/>
            <person name="Lamar B."/>
            <person name="Yordan C."/>
            <person name="Ma P."/>
            <person name="Zhong J."/>
            <person name="Preston R."/>
            <person name="Vil D."/>
            <person name="Shekher M."/>
            <person name="Matero A."/>
            <person name="Shah R."/>
            <person name="Swaby I.K."/>
            <person name="O'Shaughnessy A."/>
            <person name="Rodriguez M."/>
            <person name="Hoffman J."/>
            <person name="Till S."/>
            <person name="Granat S."/>
            <person name="Shohdy N."/>
            <person name="Hasegawa A."/>
            <person name="Hameed A."/>
            <person name="Lodhi M."/>
            <person name="Johnson A."/>
            <person name="Chen E."/>
            <person name="Marra M.A."/>
            <person name="Martienssen R."/>
            <person name="McCombie W.R."/>
        </authorList>
    </citation>
    <scope>NUCLEOTIDE SEQUENCE [LARGE SCALE GENOMIC DNA]</scope>
    <source>
        <strain>cv. Columbia</strain>
    </source>
</reference>
<reference key="3">
    <citation type="journal article" date="2017" name="Plant J.">
        <title>Araport11: a complete reannotation of the Arabidopsis thaliana reference genome.</title>
        <authorList>
            <person name="Cheng C.Y."/>
            <person name="Krishnakumar V."/>
            <person name="Chan A.P."/>
            <person name="Thibaud-Nissen F."/>
            <person name="Schobel S."/>
            <person name="Town C.D."/>
        </authorList>
    </citation>
    <scope>GENOME REANNOTATION</scope>
    <source>
        <strain>cv. Columbia</strain>
    </source>
</reference>